<protein>
    <recommendedName>
        <fullName evidence="1">Aspartate/glutamate leucyltransferase</fullName>
        <ecNumber evidence="1">2.3.2.29</ecNumber>
    </recommendedName>
</protein>
<keyword id="KW-0012">Acyltransferase</keyword>
<keyword id="KW-0963">Cytoplasm</keyword>
<keyword id="KW-1185">Reference proteome</keyword>
<keyword id="KW-0808">Transferase</keyword>
<feature type="chain" id="PRO_1000083109" description="Aspartate/glutamate leucyltransferase">
    <location>
        <begin position="1"/>
        <end position="260"/>
    </location>
</feature>
<feature type="region of interest" description="Disordered" evidence="2">
    <location>
        <begin position="241"/>
        <end position="260"/>
    </location>
</feature>
<feature type="compositionally biased region" description="Basic and acidic residues" evidence="2">
    <location>
        <begin position="241"/>
        <end position="251"/>
    </location>
</feature>
<feature type="sequence conflict" description="In Ref. 2; ACI53078." evidence="3" ref="2">
    <original>S</original>
    <variation>A</variation>
    <location>
        <position position="81"/>
    </location>
</feature>
<dbReference type="EC" id="2.3.2.29" evidence="1"/>
<dbReference type="EMBL" id="AM889285">
    <property type="protein sequence ID" value="CAP56958.1"/>
    <property type="molecule type" value="Genomic_DNA"/>
</dbReference>
<dbReference type="EMBL" id="CP001189">
    <property type="protein sequence ID" value="ACI53078.1"/>
    <property type="molecule type" value="Genomic_DNA"/>
</dbReference>
<dbReference type="RefSeq" id="WP_012227285.1">
    <property type="nucleotide sequence ID" value="NC_010125.1"/>
</dbReference>
<dbReference type="RefSeq" id="WP_012554897.1">
    <property type="nucleotide sequence ID" value="NC_011365.1"/>
</dbReference>
<dbReference type="SMR" id="A9HRQ0"/>
<dbReference type="STRING" id="272568.GDI3015"/>
<dbReference type="KEGG" id="gdi:GDI3015"/>
<dbReference type="KEGG" id="gdj:Gdia_3351"/>
<dbReference type="eggNOG" id="COG2935">
    <property type="taxonomic scope" value="Bacteria"/>
</dbReference>
<dbReference type="HOGENOM" id="CLU_077607_1_0_5"/>
<dbReference type="OrthoDB" id="9782022at2"/>
<dbReference type="Proteomes" id="UP000001176">
    <property type="component" value="Chromosome"/>
</dbReference>
<dbReference type="GO" id="GO:0005737">
    <property type="term" value="C:cytoplasm"/>
    <property type="evidence" value="ECO:0007669"/>
    <property type="project" value="UniProtKB-SubCell"/>
</dbReference>
<dbReference type="GO" id="GO:0004057">
    <property type="term" value="F:arginyl-tRNA--protein transferase activity"/>
    <property type="evidence" value="ECO:0007669"/>
    <property type="project" value="InterPro"/>
</dbReference>
<dbReference type="GO" id="GO:0008914">
    <property type="term" value="F:leucyl-tRNA--protein transferase activity"/>
    <property type="evidence" value="ECO:0007669"/>
    <property type="project" value="UniProtKB-UniRule"/>
</dbReference>
<dbReference type="GO" id="GO:0071596">
    <property type="term" value="P:ubiquitin-dependent protein catabolic process via the N-end rule pathway"/>
    <property type="evidence" value="ECO:0007669"/>
    <property type="project" value="InterPro"/>
</dbReference>
<dbReference type="HAMAP" id="MF_00689">
    <property type="entry name" value="Bpt"/>
    <property type="match status" value="1"/>
</dbReference>
<dbReference type="InterPro" id="IPR016181">
    <property type="entry name" value="Acyl_CoA_acyltransferase"/>
</dbReference>
<dbReference type="InterPro" id="IPR017138">
    <property type="entry name" value="Asp_Glu_LeuTrfase"/>
</dbReference>
<dbReference type="InterPro" id="IPR030700">
    <property type="entry name" value="N-end_Aminoacyl_Trfase"/>
</dbReference>
<dbReference type="InterPro" id="IPR007472">
    <property type="entry name" value="N-end_Aminoacyl_Trfase_C"/>
</dbReference>
<dbReference type="InterPro" id="IPR007471">
    <property type="entry name" value="N-end_Aminoacyl_Trfase_N"/>
</dbReference>
<dbReference type="NCBIfam" id="NF002341">
    <property type="entry name" value="PRK01305.1-1"/>
    <property type="match status" value="1"/>
</dbReference>
<dbReference type="NCBIfam" id="NF002342">
    <property type="entry name" value="PRK01305.1-3"/>
    <property type="match status" value="1"/>
</dbReference>
<dbReference type="NCBIfam" id="NF002343">
    <property type="entry name" value="PRK01305.1-4"/>
    <property type="match status" value="1"/>
</dbReference>
<dbReference type="NCBIfam" id="NF002346">
    <property type="entry name" value="PRK01305.2-3"/>
    <property type="match status" value="1"/>
</dbReference>
<dbReference type="PANTHER" id="PTHR21367">
    <property type="entry name" value="ARGININE-TRNA-PROTEIN TRANSFERASE 1"/>
    <property type="match status" value="1"/>
</dbReference>
<dbReference type="PANTHER" id="PTHR21367:SF1">
    <property type="entry name" value="ARGINYL-TRNA--PROTEIN TRANSFERASE 1"/>
    <property type="match status" value="1"/>
</dbReference>
<dbReference type="Pfam" id="PF04377">
    <property type="entry name" value="ATE_C"/>
    <property type="match status" value="1"/>
</dbReference>
<dbReference type="Pfam" id="PF04376">
    <property type="entry name" value="ATE_N"/>
    <property type="match status" value="1"/>
</dbReference>
<dbReference type="PIRSF" id="PIRSF037208">
    <property type="entry name" value="ATE_pro_prd"/>
    <property type="match status" value="1"/>
</dbReference>
<dbReference type="SUPFAM" id="SSF55729">
    <property type="entry name" value="Acyl-CoA N-acyltransferases (Nat)"/>
    <property type="match status" value="1"/>
</dbReference>
<comment type="function">
    <text evidence="1">Functions in the N-end rule pathway of protein degradation where it conjugates Leu from its aminoacyl-tRNA to the N-termini of proteins containing an N-terminal aspartate or glutamate.</text>
</comment>
<comment type="catalytic activity">
    <reaction evidence="1">
        <text>N-terminal L-glutamyl-[protein] + L-leucyl-tRNA(Leu) = N-terminal L-leucyl-L-glutamyl-[protein] + tRNA(Leu) + H(+)</text>
        <dbReference type="Rhea" id="RHEA:50412"/>
        <dbReference type="Rhea" id="RHEA-COMP:9613"/>
        <dbReference type="Rhea" id="RHEA-COMP:9622"/>
        <dbReference type="Rhea" id="RHEA-COMP:12664"/>
        <dbReference type="Rhea" id="RHEA-COMP:12668"/>
        <dbReference type="ChEBI" id="CHEBI:15378"/>
        <dbReference type="ChEBI" id="CHEBI:64721"/>
        <dbReference type="ChEBI" id="CHEBI:78442"/>
        <dbReference type="ChEBI" id="CHEBI:78494"/>
        <dbReference type="ChEBI" id="CHEBI:133041"/>
        <dbReference type="EC" id="2.3.2.29"/>
    </reaction>
</comment>
<comment type="catalytic activity">
    <reaction evidence="1">
        <text>N-terminal L-aspartyl-[protein] + L-leucyl-tRNA(Leu) = N-terminal L-leucyl-L-aspartyl-[protein] + tRNA(Leu) + H(+)</text>
        <dbReference type="Rhea" id="RHEA:50420"/>
        <dbReference type="Rhea" id="RHEA-COMP:9613"/>
        <dbReference type="Rhea" id="RHEA-COMP:9622"/>
        <dbReference type="Rhea" id="RHEA-COMP:12669"/>
        <dbReference type="Rhea" id="RHEA-COMP:12674"/>
        <dbReference type="ChEBI" id="CHEBI:15378"/>
        <dbReference type="ChEBI" id="CHEBI:64720"/>
        <dbReference type="ChEBI" id="CHEBI:78442"/>
        <dbReference type="ChEBI" id="CHEBI:78494"/>
        <dbReference type="ChEBI" id="CHEBI:133042"/>
        <dbReference type="EC" id="2.3.2.29"/>
    </reaction>
</comment>
<comment type="subcellular location">
    <subcellularLocation>
        <location evidence="1">Cytoplasm</location>
    </subcellularLocation>
</comment>
<comment type="similarity">
    <text evidence="1">Belongs to the R-transferase family. Bpt subfamily.</text>
</comment>
<evidence type="ECO:0000255" key="1">
    <source>
        <dbReference type="HAMAP-Rule" id="MF_00689"/>
    </source>
</evidence>
<evidence type="ECO:0000256" key="2">
    <source>
        <dbReference type="SAM" id="MobiDB-lite"/>
    </source>
</evidence>
<evidence type="ECO:0000305" key="3"/>
<sequence length="260" mass="29746">MTYTSPRRPQLFYTTAPMPCPYVAGRMERKVVTDIGGPDAERLHNRLSRAGFRRSHTIAYAPVCPSCSACVPIRVPVASFSPDRTQRRTLRRNATIEGFEVPAHATTEQFTLFQRYQFARHAEGDMAAMNFYDYRAMIEDTPIDTMMIEFRTPEDRLVCVSLIDRLDDGLSAVYSFFDPTMDARSLGSYAIMHLIAHTRRLGLPYLYLGYWIRDSAKMAYKARFQPAEILFHGAWTPLDRDRLPEEGDRGPARFPASLTE</sequence>
<gene>
    <name evidence="1" type="primary">bpt</name>
    <name type="ordered locus">GDI3015</name>
    <name type="ordered locus">Gdia_3351</name>
</gene>
<organism>
    <name type="scientific">Gluconacetobacter diazotrophicus (strain ATCC 49037 / DSM 5601 / CCUG 37298 / CIP 103539 / LMG 7603 / PAl5)</name>
    <dbReference type="NCBI Taxonomy" id="272568"/>
    <lineage>
        <taxon>Bacteria</taxon>
        <taxon>Pseudomonadati</taxon>
        <taxon>Pseudomonadota</taxon>
        <taxon>Alphaproteobacteria</taxon>
        <taxon>Acetobacterales</taxon>
        <taxon>Acetobacteraceae</taxon>
        <taxon>Gluconacetobacter</taxon>
    </lineage>
</organism>
<name>BPT_GLUDA</name>
<proteinExistence type="inferred from homology"/>
<accession>A9HRQ0</accession>
<accession>B5ZLD6</accession>
<reference key="1">
    <citation type="journal article" date="2009" name="BMC Genomics">
        <title>Complete genome sequence of the sugarcane nitrogen-fixing endophyte Gluconacetobacter diazotrophicus Pal5.</title>
        <authorList>
            <person name="Bertalan M."/>
            <person name="Albano R."/>
            <person name="de Padua V."/>
            <person name="Rouws L."/>
            <person name="Rojas C."/>
            <person name="Hemerly A."/>
            <person name="Teixeira K."/>
            <person name="Schwab S."/>
            <person name="Araujo J."/>
            <person name="Oliveira A."/>
            <person name="Franca L."/>
            <person name="Magalhaes V."/>
            <person name="Alqueres S."/>
            <person name="Cardoso A."/>
            <person name="Almeida W."/>
            <person name="Loureiro M.M."/>
            <person name="Nogueira E."/>
            <person name="Cidade D."/>
            <person name="Oliveira D."/>
            <person name="Simao T."/>
            <person name="Macedo J."/>
            <person name="Valadao A."/>
            <person name="Dreschsel M."/>
            <person name="Freitas F."/>
            <person name="Vidal M."/>
            <person name="Guedes H."/>
            <person name="Rodrigues E."/>
            <person name="Meneses C."/>
            <person name="Brioso P."/>
            <person name="Pozzer L."/>
            <person name="Figueiredo D."/>
            <person name="Montano H."/>
            <person name="Junior J."/>
            <person name="de Souza Filho G."/>
            <person name="Martin Quintana Flores V."/>
            <person name="Ferreira B."/>
            <person name="Branco A."/>
            <person name="Gonzalez P."/>
            <person name="Guillobel H."/>
            <person name="Lemos M."/>
            <person name="Seibel L."/>
            <person name="Macedo J."/>
            <person name="Alves-Ferreira M."/>
            <person name="Sachetto-Martins G."/>
            <person name="Coelho A."/>
            <person name="Santos E."/>
            <person name="Amaral G."/>
            <person name="Neves A."/>
            <person name="Pacheco A.B."/>
            <person name="Carvalho D."/>
            <person name="Lery L."/>
            <person name="Bisch P."/>
            <person name="Rossle S.C."/>
            <person name="Urmenyi T."/>
            <person name="Rael Pereira A."/>
            <person name="Silva R."/>
            <person name="Rondinelli E."/>
            <person name="von Kruger W."/>
            <person name="Martins O."/>
            <person name="Baldani J.I."/>
            <person name="Ferreira P.C."/>
        </authorList>
    </citation>
    <scope>NUCLEOTIDE SEQUENCE [LARGE SCALE GENOMIC DNA]</scope>
    <source>
        <strain>ATCC 49037 / DSM 5601 / CCUG 37298 / CIP 103539 / LMG 7603 / PAl5</strain>
    </source>
</reference>
<reference key="2">
    <citation type="journal article" date="2010" name="Stand. Genomic Sci.">
        <title>Two genome sequences of the same bacterial strain, Gluconacetobacter diazotrophicus PAl 5, suggest a new standard in genome sequence submission.</title>
        <authorList>
            <person name="Giongo A."/>
            <person name="Tyler H.L."/>
            <person name="Zipperer U.N."/>
            <person name="Triplett E.W."/>
        </authorList>
    </citation>
    <scope>NUCLEOTIDE SEQUENCE [LARGE SCALE GENOMIC DNA]</scope>
    <source>
        <strain>ATCC 49037 / DSM 5601 / CCUG 37298 / CIP 103539 / LMG 7603 / PAl5</strain>
    </source>
</reference>